<protein>
    <recommendedName>
        <fullName>Putative ATPase Mb3704</fullName>
    </recommendedName>
</protein>
<accession>P65090</accession>
<accession>A0A1R3Y4W0</accession>
<accession>O69647</accession>
<accession>X2BPJ1</accession>
<organism>
    <name type="scientific">Mycobacterium bovis (strain ATCC BAA-935 / AF2122/97)</name>
    <dbReference type="NCBI Taxonomy" id="233413"/>
    <lineage>
        <taxon>Bacteria</taxon>
        <taxon>Bacillati</taxon>
        <taxon>Actinomycetota</taxon>
        <taxon>Actinomycetes</taxon>
        <taxon>Mycobacteriales</taxon>
        <taxon>Mycobacteriaceae</taxon>
        <taxon>Mycobacterium</taxon>
        <taxon>Mycobacterium tuberculosis complex</taxon>
    </lineage>
</organism>
<feature type="chain" id="PRO_0000104144" description="Putative ATPase Mb3704">
    <location>
        <begin position="1"/>
        <end position="340"/>
    </location>
</feature>
<feature type="binding site" evidence="1">
    <location>
        <begin position="28"/>
        <end position="35"/>
    </location>
    <ligand>
        <name>ATP</name>
        <dbReference type="ChEBI" id="CHEBI:30616"/>
    </ligand>
</feature>
<name>Y3704_MYCBO</name>
<keyword id="KW-0067">ATP-binding</keyword>
<keyword id="KW-0547">Nucleotide-binding</keyword>
<keyword id="KW-1185">Reference proteome</keyword>
<sequence length="340" mass="35856">MVATTSSGGSSVGWPSRLSGVRLHLVTGKGGTGKSTIAAALALTLAAGGRKVLLVEVEGRQGIAQLFDVPPLPYQELKIATAERGGQVNALAIDIEAAFLEYLDMFYNLGIAGRAMRRIGAVEFATTIAPGLRDVLLTGKIKETVVRLDKNKLPVYDAIVVDAPPTGRIARFLDVTKAVSDLAKGGPVHAQSEGVVKLLHSNQTAIHLVTLLEALPVQETLEAIEELAQMELPIGSVIVNRNIPAHLEPQDLAKAAEGEVDADSVRAGLLTAGVKLPDADFAGLLTETIQHATRITARAEIAQQLDALQVPRLELPTVSDGVDLGSLYELSESLAQQGVR</sequence>
<gene>
    <name type="ordered locus">BQ2027_MB3704</name>
</gene>
<reference key="1">
    <citation type="journal article" date="2003" name="Proc. Natl. Acad. Sci. U.S.A.">
        <title>The complete genome sequence of Mycobacterium bovis.</title>
        <authorList>
            <person name="Garnier T."/>
            <person name="Eiglmeier K."/>
            <person name="Camus J.-C."/>
            <person name="Medina N."/>
            <person name="Mansoor H."/>
            <person name="Pryor M."/>
            <person name="Duthoy S."/>
            <person name="Grondin S."/>
            <person name="Lacroix C."/>
            <person name="Monsempe C."/>
            <person name="Simon S."/>
            <person name="Harris B."/>
            <person name="Atkin R."/>
            <person name="Doggett J."/>
            <person name="Mayes R."/>
            <person name="Keating L."/>
            <person name="Wheeler P.R."/>
            <person name="Parkhill J."/>
            <person name="Barrell B.G."/>
            <person name="Cole S.T."/>
            <person name="Gordon S.V."/>
            <person name="Hewinson R.G."/>
        </authorList>
    </citation>
    <scope>NUCLEOTIDE SEQUENCE [LARGE SCALE GENOMIC DNA]</scope>
    <source>
        <strain>ATCC BAA-935 / AF2122/97</strain>
    </source>
</reference>
<reference key="2">
    <citation type="journal article" date="2017" name="Genome Announc.">
        <title>Updated reference genome sequence and annotation of Mycobacterium bovis AF2122/97.</title>
        <authorList>
            <person name="Malone K.M."/>
            <person name="Farrell D."/>
            <person name="Stuber T.P."/>
            <person name="Schubert O.T."/>
            <person name="Aebersold R."/>
            <person name="Robbe-Austerman S."/>
            <person name="Gordon S.V."/>
        </authorList>
    </citation>
    <scope>NUCLEOTIDE SEQUENCE [LARGE SCALE GENOMIC DNA]</scope>
    <scope>GENOME REANNOTATION</scope>
    <source>
        <strain>ATCC BAA-935 / AF2122/97</strain>
    </source>
</reference>
<proteinExistence type="predicted"/>
<evidence type="ECO:0000255" key="1"/>
<dbReference type="EMBL" id="LT708304">
    <property type="protein sequence ID" value="SIU02332.1"/>
    <property type="molecule type" value="Genomic_DNA"/>
</dbReference>
<dbReference type="RefSeq" id="NP_857343.1">
    <property type="nucleotide sequence ID" value="NC_002945.3"/>
</dbReference>
<dbReference type="RefSeq" id="WP_003419738.1">
    <property type="nucleotide sequence ID" value="NC_002945.4"/>
</dbReference>
<dbReference type="SMR" id="P65090"/>
<dbReference type="KEGG" id="mbo:BQ2027_MB3704"/>
<dbReference type="PATRIC" id="fig|233413.5.peg.4055"/>
<dbReference type="Proteomes" id="UP000001419">
    <property type="component" value="Chromosome"/>
</dbReference>
<dbReference type="GO" id="GO:0005524">
    <property type="term" value="F:ATP binding"/>
    <property type="evidence" value="ECO:0007669"/>
    <property type="project" value="UniProtKB-KW"/>
</dbReference>
<dbReference type="GO" id="GO:0016887">
    <property type="term" value="F:ATP hydrolysis activity"/>
    <property type="evidence" value="ECO:0007669"/>
    <property type="project" value="InterPro"/>
</dbReference>
<dbReference type="Gene3D" id="3.40.50.300">
    <property type="entry name" value="P-loop containing nucleotide triphosphate hydrolases"/>
    <property type="match status" value="1"/>
</dbReference>
<dbReference type="InterPro" id="IPR025723">
    <property type="entry name" value="Anion-transp_ATPase-like_dom"/>
</dbReference>
<dbReference type="InterPro" id="IPR016300">
    <property type="entry name" value="ATPase_ArsA/GET3"/>
</dbReference>
<dbReference type="InterPro" id="IPR027417">
    <property type="entry name" value="P-loop_NTPase"/>
</dbReference>
<dbReference type="PANTHER" id="PTHR10803">
    <property type="entry name" value="ARSENICAL PUMP-DRIVING ATPASE ARSENITE-TRANSLOCATING ATPASE"/>
    <property type="match status" value="1"/>
</dbReference>
<dbReference type="PANTHER" id="PTHR10803:SF31">
    <property type="entry name" value="ATPASE RV3679-RELATED"/>
    <property type="match status" value="1"/>
</dbReference>
<dbReference type="Pfam" id="PF02374">
    <property type="entry name" value="ArsA_ATPase"/>
    <property type="match status" value="2"/>
</dbReference>
<dbReference type="SUPFAM" id="SSF52540">
    <property type="entry name" value="P-loop containing nucleoside triphosphate hydrolases"/>
    <property type="match status" value="1"/>
</dbReference>